<dbReference type="EC" id="3.1.-.-" evidence="1 2"/>
<dbReference type="EMBL" id="AM406671">
    <property type="protein sequence ID" value="CAL96611.1"/>
    <property type="molecule type" value="Genomic_DNA"/>
</dbReference>
<dbReference type="RefSeq" id="WP_011834122.1">
    <property type="nucleotide sequence ID" value="NC_009004.1"/>
</dbReference>
<dbReference type="SMR" id="A2RH76"/>
<dbReference type="STRING" id="416870.llmg_0003"/>
<dbReference type="KEGG" id="llm:llmg_0003"/>
<dbReference type="eggNOG" id="COG3857">
    <property type="taxonomic scope" value="Bacteria"/>
</dbReference>
<dbReference type="HOGENOM" id="CLU_007838_0_0_9"/>
<dbReference type="OrthoDB" id="9758506at2"/>
<dbReference type="PhylomeDB" id="A2RH76"/>
<dbReference type="Proteomes" id="UP000000364">
    <property type="component" value="Chromosome"/>
</dbReference>
<dbReference type="GO" id="GO:0051539">
    <property type="term" value="F:4 iron, 4 sulfur cluster binding"/>
    <property type="evidence" value="ECO:0007669"/>
    <property type="project" value="UniProtKB-KW"/>
</dbReference>
<dbReference type="GO" id="GO:0008409">
    <property type="term" value="F:5'-3' exonuclease activity"/>
    <property type="evidence" value="ECO:0007669"/>
    <property type="project" value="UniProtKB-UniRule"/>
</dbReference>
<dbReference type="GO" id="GO:0005524">
    <property type="term" value="F:ATP binding"/>
    <property type="evidence" value="ECO:0007669"/>
    <property type="project" value="UniProtKB-UniRule"/>
</dbReference>
<dbReference type="GO" id="GO:0003690">
    <property type="term" value="F:double-stranded DNA binding"/>
    <property type="evidence" value="ECO:0007669"/>
    <property type="project" value="UniProtKB-UniRule"/>
</dbReference>
<dbReference type="GO" id="GO:0004386">
    <property type="term" value="F:helicase activity"/>
    <property type="evidence" value="ECO:0007669"/>
    <property type="project" value="UniProtKB-KW"/>
</dbReference>
<dbReference type="GO" id="GO:0016817">
    <property type="term" value="F:hydrolase activity, acting on acid anhydrides"/>
    <property type="evidence" value="ECO:0007669"/>
    <property type="project" value="InterPro"/>
</dbReference>
<dbReference type="GO" id="GO:0046872">
    <property type="term" value="F:metal ion binding"/>
    <property type="evidence" value="ECO:0007669"/>
    <property type="project" value="UniProtKB-KW"/>
</dbReference>
<dbReference type="GO" id="GO:0000724">
    <property type="term" value="P:double-strand break repair via homologous recombination"/>
    <property type="evidence" value="ECO:0007669"/>
    <property type="project" value="UniProtKB-UniRule"/>
</dbReference>
<dbReference type="Gene3D" id="3.90.320.10">
    <property type="match status" value="1"/>
</dbReference>
<dbReference type="Gene3D" id="3.40.50.300">
    <property type="entry name" value="P-loop containing nucleotide triphosphate hydrolases"/>
    <property type="match status" value="3"/>
</dbReference>
<dbReference type="HAMAP" id="MF_01453">
    <property type="entry name" value="AddB_type2"/>
    <property type="match status" value="1"/>
</dbReference>
<dbReference type="InterPro" id="IPR049035">
    <property type="entry name" value="ADDB_N"/>
</dbReference>
<dbReference type="InterPro" id="IPR014141">
    <property type="entry name" value="DNA_helicase_suRexB"/>
</dbReference>
<dbReference type="InterPro" id="IPR027417">
    <property type="entry name" value="P-loop_NTPase"/>
</dbReference>
<dbReference type="InterPro" id="IPR011604">
    <property type="entry name" value="PDDEXK-like_dom_sf"/>
</dbReference>
<dbReference type="InterPro" id="IPR038726">
    <property type="entry name" value="PDDEXK_AddAB-type"/>
</dbReference>
<dbReference type="NCBIfam" id="TIGR02774">
    <property type="entry name" value="rexB_recomb"/>
    <property type="match status" value="1"/>
</dbReference>
<dbReference type="PANTHER" id="PTHR30591">
    <property type="entry name" value="RECBCD ENZYME SUBUNIT RECC"/>
    <property type="match status" value="1"/>
</dbReference>
<dbReference type="PANTHER" id="PTHR30591:SF1">
    <property type="entry name" value="RECBCD ENZYME SUBUNIT RECC"/>
    <property type="match status" value="1"/>
</dbReference>
<dbReference type="Pfam" id="PF21445">
    <property type="entry name" value="ADDB_N"/>
    <property type="match status" value="1"/>
</dbReference>
<dbReference type="Pfam" id="PF12705">
    <property type="entry name" value="PDDEXK_1"/>
    <property type="match status" value="1"/>
</dbReference>
<dbReference type="SUPFAM" id="SSF52540">
    <property type="entry name" value="P-loop containing nucleoside triphosphate hydrolases"/>
    <property type="match status" value="1"/>
</dbReference>
<name>ADDB_LACLM</name>
<keyword id="KW-0004">4Fe-4S</keyword>
<keyword id="KW-0067">ATP-binding</keyword>
<keyword id="KW-0227">DNA damage</keyword>
<keyword id="KW-0234">DNA repair</keyword>
<keyword id="KW-0238">DNA-binding</keyword>
<keyword id="KW-0269">Exonuclease</keyword>
<keyword id="KW-0347">Helicase</keyword>
<keyword id="KW-0378">Hydrolase</keyword>
<keyword id="KW-0408">Iron</keyword>
<keyword id="KW-0411">Iron-sulfur</keyword>
<keyword id="KW-0479">Metal-binding</keyword>
<keyword id="KW-0540">Nuclease</keyword>
<keyword id="KW-0547">Nucleotide-binding</keyword>
<evidence type="ECO:0000255" key="1">
    <source>
        <dbReference type="HAMAP-Rule" id="MF_01453"/>
    </source>
</evidence>
<evidence type="ECO:0000269" key="2">
    <source>
    </source>
</evidence>
<evidence type="ECO:0000269" key="3">
    <source>
    </source>
</evidence>
<evidence type="ECO:0000303" key="4">
    <source>
    </source>
</evidence>
<evidence type="ECO:0000303" key="5">
    <source>
    </source>
</evidence>
<evidence type="ECO:0000305" key="6">
    <source>
    </source>
</evidence>
<gene>
    <name evidence="1 5" type="primary">rexB</name>
    <name type="ordered locus">llmg_0003</name>
</gene>
<organism>
    <name type="scientific">Lactococcus lactis subsp. cremoris (strain MG1363)</name>
    <dbReference type="NCBI Taxonomy" id="416870"/>
    <lineage>
        <taxon>Bacteria</taxon>
        <taxon>Bacillati</taxon>
        <taxon>Bacillota</taxon>
        <taxon>Bacilli</taxon>
        <taxon>Lactobacillales</taxon>
        <taxon>Streptococcaceae</taxon>
        <taxon>Lactococcus</taxon>
        <taxon>Lactococcus cremoris subsp. cremoris</taxon>
    </lineage>
</organism>
<proteinExistence type="evidence at protein level"/>
<accession>A2RH76</accession>
<feature type="chain" id="PRO_0000379380" description="Exonuclease/helicase subunit RexB">
    <location>
        <begin position="1"/>
        <end position="1099"/>
    </location>
</feature>
<feature type="binding site" evidence="1">
    <location>
        <position position="766"/>
    </location>
    <ligand>
        <name>[4Fe-4S] cluster</name>
        <dbReference type="ChEBI" id="CHEBI:49883"/>
    </ligand>
</feature>
<feature type="binding site" evidence="1">
    <location>
        <position position="1056"/>
    </location>
    <ligand>
        <name>[4Fe-4S] cluster</name>
        <dbReference type="ChEBI" id="CHEBI:49883"/>
    </ligand>
</feature>
<feature type="binding site" evidence="1">
    <location>
        <position position="1059"/>
    </location>
    <ligand>
        <name>[4Fe-4S] cluster</name>
        <dbReference type="ChEBI" id="CHEBI:49883"/>
    </ligand>
</feature>
<feature type="binding site" evidence="1">
    <location>
        <position position="1065"/>
    </location>
    <ligand>
        <name>[4Fe-4S] cluster</name>
        <dbReference type="ChEBI" id="CHEBI:49883"/>
    </ligand>
</feature>
<feature type="mutagenesis site" description="Increase in UV sensitivity, some loss of nuclease activity, still recognizes chi sequences. Shows hyperrecombination." evidence="2">
    <location>
        <begin position="910"/>
        <end position="912"/>
    </location>
</feature>
<feature type="mutagenesis site" description="Slight increase in UV sensitivity, slight loss of nuclease activity, still recognizes chi sequence. Shows hyperrecombination." evidence="2">
    <original>D</original>
    <variation>A</variation>
    <location>
        <position position="910"/>
    </location>
</feature>
<protein>
    <recommendedName>
        <fullName evidence="4">Exonuclease/helicase subunit RexB</fullName>
        <ecNumber evidence="1 2">3.1.-.-</ecNumber>
    </recommendedName>
    <alternativeName>
        <fullName evidence="1">ATP-dependent helicase/deoxyribonuclease subunit B</fullName>
    </alternativeName>
    <alternativeName>
        <fullName evidence="1">ATP-dependent helicase/nuclease subunit RexB</fullName>
    </alternativeName>
</protein>
<reference key="1">
    <citation type="journal article" date="1998" name="Proc. Natl. Acad. Sci. U.S.A.">
        <title>Identification of the lactococcal exonuclease/recombinase and its modulation by the putative Chi sequence.</title>
        <authorList>
            <person name="El-Karoui M."/>
            <person name="Ehrlich S.D."/>
            <person name="Gruss A."/>
        </authorList>
    </citation>
    <scope>NUCLEOTIDE SEQUENCE [GENOMIC DNA]</scope>
    <scope>FUNCTION</scope>
    <scope>FUNCTION IN E.COLI</scope>
    <scope>OPERON STRUCTURE</scope>
</reference>
<reference key="2">
    <citation type="journal article" date="2007" name="J. Bacteriol.">
        <title>The complete genome sequence of the lactic acid bacterial paradigm Lactococcus lactis subsp. cremoris MG1363.</title>
        <authorList>
            <person name="Wegmann U."/>
            <person name="O'Connell-Motherway M."/>
            <person name="Zomer A."/>
            <person name="Buist G."/>
            <person name="Shearman C."/>
            <person name="Canchaya C."/>
            <person name="Ventura M."/>
            <person name="Goesmann A."/>
            <person name="Gasson M.J."/>
            <person name="Kuipers O.P."/>
            <person name="van Sinderen D."/>
            <person name="Kok J."/>
        </authorList>
    </citation>
    <scope>NUCLEOTIDE SEQUENCE [LARGE SCALE GENOMIC DNA]</scope>
    <source>
        <strain>MG1363</strain>
    </source>
</reference>
<reference key="3">
    <citation type="journal article" date="2000" name="Genes Cells">
        <title>Orientation specificity of the Lactococcus lactis Chi site.</title>
        <authorList>
            <person name="El Karoui M."/>
            <person name="Schaeffer M."/>
            <person name="Biaudet V."/>
            <person name="Bolotin A."/>
            <person name="Sorokin A."/>
            <person name="Gruss A."/>
        </authorList>
    </citation>
    <scope>RECOGNITION OF CHI SEQUENCES</scope>
</reference>
<reference key="4">
    <citation type="journal article" date="2001" name="J. Bacteriol.">
        <title>In vivo evidence for two active nuclease motifs in the double-strand break repair enzyme RexAB of Lactococcus lactis.</title>
        <authorList>
            <person name="Quiberoni A."/>
            <person name="Biswas I."/>
            <person name="El Karoui M."/>
            <person name="Rezaiki L."/>
            <person name="Tailliez P."/>
            <person name="Gruss A."/>
        </authorList>
    </citation>
    <scope>FUNCTION</scope>
    <scope>EXONUCLEASE ACTIVITY</scope>
    <scope>MUTAGENESIS OF ASP-910 AND 910-ASP--LYS-912</scope>
</reference>
<comment type="function">
    <text evidence="2 3">The heterodimer acts both as an ATP-dependent DNA helicase and an ATP-dependent, dual-direction single-stranded exonuclease. Recognizes the L.lactis chi site (5'-GCGCGTG-3'), which stimulates homologous recombination. This subunit has 5'-&gt;3' exonuclease activity.</text>
</comment>
<comment type="function">
    <text evidence="1">The heterodimer acts as both an ATP-dependent DNA helicase and an ATP-dependent, dual-direction single-stranded exonuclease. Recognizes the chi site generating a DNA molecule suitable for the initiation of homologous recombination. This subunit has 5' -&gt; 3' nuclease activity but not helicase activity.</text>
</comment>
<comment type="cofactor">
    <cofactor evidence="1">
        <name>Mg(2+)</name>
        <dbReference type="ChEBI" id="CHEBI:18420"/>
    </cofactor>
</comment>
<comment type="cofactor">
    <cofactor evidence="1">
        <name>[4Fe-4S] cluster</name>
        <dbReference type="ChEBI" id="CHEBI:49883"/>
    </cofactor>
    <text evidence="1">Binds 1 [4Fe-4S] cluster.</text>
</comment>
<comment type="subunit">
    <text evidence="6">Heterodimer of RexA (AddA) and RexB.</text>
</comment>
<comment type="miscellaneous">
    <text evidence="1">Despite having helicase-like domains, this subunit does not have helicase activity.</text>
</comment>
<comment type="similarity">
    <text evidence="1">Belongs to the helicase family. AddB/RexB type 2 subfamily.</text>
</comment>
<sequence length="1099" mass="127227">MEILYTEITQDLTEGLLEIALEELEKNRKVYYIVPSSMSFEKEKEILERLAKGSDTAVFDLLVTRFKQLPYYFDKREKATMKTELGTVGLSMLFRRVLRSFKKDEIPLYFSLQDSAGFLEMLIQLRAELLTANLSVENLPDNPKNQELKKILAKFEAELSVEYANYSEFGDFTNRLVDGEFDQQLKDVTIIIDGYTRFSAEEELFIESIQEKVARFVVGTYSDENSLTAGSETIYVGTSQMITRFRNKFPVELRKIASSAVNEVYSKLTRILDLDSRFVITDEKIELKAEDEKYFRIWEAENQKVEIERVAKEIRQKIIQGAFFKDFTVLVGDPAAYEITLKEVFDLYEIPFFYAQEESMSQHPLVIFFESLFAIKKNNYRTDDVVNLLKSKVYTDANLDEEVIDYFEYYVQKYKISGRKKFTEEFIESEFSQIELVNEMREKLLGSESPLQVFLGNNRKKTGKKWVSDLQGLLENGNVMTNMNAYFSAAELQNEHQMADKHEQVWQMLISTLNEFLAVFSDEKLKSVEFLDILLAGLKNAKYRQIPANVDVVNVKDYELVEPKTNKYIYAIGLSQTNFPRIKKNSTLLSDEERLEINQTTDENQFIEQLNVANYQKNQFTVLSLINSAKESLVLSMPQIMANEQGEFSPVFQLFLKDADEKILQKIQGVNLFESLEHIGNSRSVIAMIGQIERELVESEETSEDKRVFWSSIFRILVKSNADFQKILLDLAKDIDTVNLAPDTLEQIYGDKIYASVSSFERFYNCEYQYFLENTLSLETFENIDINSKIVGNFFHEVFEKVMKETDLSAENFDEKLTLVLQEVDKNYSRYFTQDATARFTWSNLEEIVRQTATVLKATVSTDELKTLLTESSFGLPKSELGNFSVDDIYLRGRIDRLDQLSTDYLGAIDYKSSAHSFKLQEAYDGLSLQFMTYLDVIKQAFPNQKIWGALYLQFKNQPINLSEINQLSEIANILKESMRYEGLVLEDAAEQIKGIENIALKKTNIYNEEEFEQLLKLNEEHYRAAGQRLKKGKIAINPIMKRSEGIDQSGNVRGCRYCPLKSICRFEANIHMNEHSREIGQKSQAEILAELKGEERDE</sequence>